<comment type="function">
    <text evidence="1">An aminoacyl-tRNA editing enzyme that deacylates mischarged D-aminoacyl-tRNAs. Also deacylates mischarged glycyl-tRNA(Ala), protecting cells against glycine mischarging by AlaRS. Acts via tRNA-based rather than protein-based catalysis; rejects L-amino acids rather than detecting D-amino acids in the active site. By recycling D-aminoacyl-tRNA to D-amino acids and free tRNA molecules, this enzyme counteracts the toxicity associated with the formation of D-aminoacyl-tRNA entities in vivo and helps enforce protein L-homochirality.</text>
</comment>
<comment type="catalytic activity">
    <reaction evidence="1">
        <text>glycyl-tRNA(Ala) + H2O = tRNA(Ala) + glycine + H(+)</text>
        <dbReference type="Rhea" id="RHEA:53744"/>
        <dbReference type="Rhea" id="RHEA-COMP:9657"/>
        <dbReference type="Rhea" id="RHEA-COMP:13640"/>
        <dbReference type="ChEBI" id="CHEBI:15377"/>
        <dbReference type="ChEBI" id="CHEBI:15378"/>
        <dbReference type="ChEBI" id="CHEBI:57305"/>
        <dbReference type="ChEBI" id="CHEBI:78442"/>
        <dbReference type="ChEBI" id="CHEBI:78522"/>
        <dbReference type="EC" id="3.1.1.96"/>
    </reaction>
</comment>
<comment type="catalytic activity">
    <reaction evidence="1">
        <text>a D-aminoacyl-tRNA + H2O = a tRNA + a D-alpha-amino acid + H(+)</text>
        <dbReference type="Rhea" id="RHEA:13953"/>
        <dbReference type="Rhea" id="RHEA-COMP:10123"/>
        <dbReference type="Rhea" id="RHEA-COMP:10124"/>
        <dbReference type="ChEBI" id="CHEBI:15377"/>
        <dbReference type="ChEBI" id="CHEBI:15378"/>
        <dbReference type="ChEBI" id="CHEBI:59871"/>
        <dbReference type="ChEBI" id="CHEBI:78442"/>
        <dbReference type="ChEBI" id="CHEBI:79333"/>
        <dbReference type="EC" id="3.1.1.96"/>
    </reaction>
</comment>
<comment type="subunit">
    <text evidence="1">Homodimer.</text>
</comment>
<comment type="subcellular location">
    <subcellularLocation>
        <location evidence="1">Cytoplasm</location>
    </subcellularLocation>
</comment>
<comment type="domain">
    <text evidence="1">A Gly-cisPro motif from one monomer fits into the active site of the other monomer to allow specific chiral rejection of L-amino acids.</text>
</comment>
<comment type="similarity">
    <text evidence="1">Belongs to the DTD family.</text>
</comment>
<evidence type="ECO:0000255" key="1">
    <source>
        <dbReference type="HAMAP-Rule" id="MF_00518"/>
    </source>
</evidence>
<keyword id="KW-0963">Cytoplasm</keyword>
<keyword id="KW-0378">Hydrolase</keyword>
<keyword id="KW-0694">RNA-binding</keyword>
<keyword id="KW-0820">tRNA-binding</keyword>
<accession>A6TG77</accession>
<gene>
    <name evidence="1" type="primary">dtd</name>
    <name type="ordered locus">KPN78578_41370</name>
    <name type="ORF">KPN_04182</name>
</gene>
<feature type="chain" id="PRO_1000050841" description="D-aminoacyl-tRNA deacylase">
    <location>
        <begin position="1"/>
        <end position="145"/>
    </location>
</feature>
<feature type="short sequence motif" description="Gly-cisPro motif, important for rejection of L-amino acids" evidence="1">
    <location>
        <begin position="137"/>
        <end position="138"/>
    </location>
</feature>
<protein>
    <recommendedName>
        <fullName evidence="1">D-aminoacyl-tRNA deacylase</fullName>
        <shortName evidence="1">DTD</shortName>
        <ecNumber evidence="1">3.1.1.96</ecNumber>
    </recommendedName>
    <alternativeName>
        <fullName evidence="1">Gly-tRNA(Ala) deacylase</fullName>
    </alternativeName>
</protein>
<organism>
    <name type="scientific">Klebsiella pneumoniae subsp. pneumoniae (strain ATCC 700721 / MGH 78578)</name>
    <dbReference type="NCBI Taxonomy" id="272620"/>
    <lineage>
        <taxon>Bacteria</taxon>
        <taxon>Pseudomonadati</taxon>
        <taxon>Pseudomonadota</taxon>
        <taxon>Gammaproteobacteria</taxon>
        <taxon>Enterobacterales</taxon>
        <taxon>Enterobacteriaceae</taxon>
        <taxon>Klebsiella/Raoultella group</taxon>
        <taxon>Klebsiella</taxon>
        <taxon>Klebsiella pneumoniae complex</taxon>
    </lineage>
</organism>
<proteinExistence type="inferred from homology"/>
<reference key="1">
    <citation type="submission" date="2006-09" db="EMBL/GenBank/DDBJ databases">
        <authorList>
            <consortium name="The Klebsiella pneumonia Genome Sequencing Project"/>
            <person name="McClelland M."/>
            <person name="Sanderson E.K."/>
            <person name="Spieth J."/>
            <person name="Clifton W.S."/>
            <person name="Latreille P."/>
            <person name="Sabo A."/>
            <person name="Pepin K."/>
            <person name="Bhonagiri V."/>
            <person name="Porwollik S."/>
            <person name="Ali J."/>
            <person name="Wilson R.K."/>
        </authorList>
    </citation>
    <scope>NUCLEOTIDE SEQUENCE [LARGE SCALE GENOMIC DNA]</scope>
    <source>
        <strain>ATCC 700721 / MGH 78578</strain>
    </source>
</reference>
<sequence length="145" mass="15925">MIALIQRVSRASVTVADEVTGEIGPGLLVLLGVEKDDDEQKANRLCERVLGYRIFSDAEGKMNLNVQQAGGSVLVVSQFTLAADTERGMRPSFSKGAAPDRAEALYEYFVARCRQQEMHTQTGRFAADMQVSLVNDGPVTFWLQV</sequence>
<name>DTD_KLEP7</name>
<dbReference type="EC" id="3.1.1.96" evidence="1"/>
<dbReference type="EMBL" id="CP000647">
    <property type="protein sequence ID" value="ABR79561.1"/>
    <property type="molecule type" value="Genomic_DNA"/>
</dbReference>
<dbReference type="RefSeq" id="WP_002882809.1">
    <property type="nucleotide sequence ID" value="NC_009648.1"/>
</dbReference>
<dbReference type="SMR" id="A6TG77"/>
<dbReference type="STRING" id="272620.KPN_04182"/>
<dbReference type="PaxDb" id="272620-KPN_04182"/>
<dbReference type="EnsemblBacteria" id="ABR79561">
    <property type="protein sequence ID" value="ABR79561"/>
    <property type="gene ID" value="KPN_04182"/>
</dbReference>
<dbReference type="KEGG" id="kpn:KPN_04182"/>
<dbReference type="HOGENOM" id="CLU_076901_1_0_6"/>
<dbReference type="Proteomes" id="UP000000265">
    <property type="component" value="Chromosome"/>
</dbReference>
<dbReference type="GO" id="GO:0005737">
    <property type="term" value="C:cytoplasm"/>
    <property type="evidence" value="ECO:0007669"/>
    <property type="project" value="UniProtKB-SubCell"/>
</dbReference>
<dbReference type="GO" id="GO:0051500">
    <property type="term" value="F:D-tyrosyl-tRNA(Tyr) deacylase activity"/>
    <property type="evidence" value="ECO:0007669"/>
    <property type="project" value="TreeGrafter"/>
</dbReference>
<dbReference type="GO" id="GO:0106026">
    <property type="term" value="F:Gly-tRNA(Ala) deacylase activity"/>
    <property type="evidence" value="ECO:0007669"/>
    <property type="project" value="UniProtKB-UniRule"/>
</dbReference>
<dbReference type="GO" id="GO:0043908">
    <property type="term" value="F:Ser(Gly)-tRNA(Ala) hydrolase activity"/>
    <property type="evidence" value="ECO:0007669"/>
    <property type="project" value="UniProtKB-UniRule"/>
</dbReference>
<dbReference type="GO" id="GO:0000049">
    <property type="term" value="F:tRNA binding"/>
    <property type="evidence" value="ECO:0007669"/>
    <property type="project" value="UniProtKB-UniRule"/>
</dbReference>
<dbReference type="GO" id="GO:0019478">
    <property type="term" value="P:D-amino acid catabolic process"/>
    <property type="evidence" value="ECO:0007669"/>
    <property type="project" value="UniProtKB-UniRule"/>
</dbReference>
<dbReference type="CDD" id="cd00563">
    <property type="entry name" value="Dtyr_deacylase"/>
    <property type="match status" value="1"/>
</dbReference>
<dbReference type="FunFam" id="3.50.80.10:FF:000001">
    <property type="entry name" value="D-aminoacyl-tRNA deacylase"/>
    <property type="match status" value="1"/>
</dbReference>
<dbReference type="Gene3D" id="3.50.80.10">
    <property type="entry name" value="D-tyrosyl-tRNA(Tyr) deacylase"/>
    <property type="match status" value="1"/>
</dbReference>
<dbReference type="HAMAP" id="MF_00518">
    <property type="entry name" value="Deacylase_Dtd"/>
    <property type="match status" value="1"/>
</dbReference>
<dbReference type="InterPro" id="IPR003732">
    <property type="entry name" value="Daa-tRNA_deacyls_DTD"/>
</dbReference>
<dbReference type="InterPro" id="IPR023509">
    <property type="entry name" value="DTD-like_sf"/>
</dbReference>
<dbReference type="NCBIfam" id="TIGR00256">
    <property type="entry name" value="D-aminoacyl-tRNA deacylase"/>
    <property type="match status" value="1"/>
</dbReference>
<dbReference type="PANTHER" id="PTHR10472:SF5">
    <property type="entry name" value="D-AMINOACYL-TRNA DEACYLASE 1"/>
    <property type="match status" value="1"/>
</dbReference>
<dbReference type="PANTHER" id="PTHR10472">
    <property type="entry name" value="D-TYROSYL-TRNA TYR DEACYLASE"/>
    <property type="match status" value="1"/>
</dbReference>
<dbReference type="Pfam" id="PF02580">
    <property type="entry name" value="Tyr_Deacylase"/>
    <property type="match status" value="1"/>
</dbReference>
<dbReference type="SUPFAM" id="SSF69500">
    <property type="entry name" value="DTD-like"/>
    <property type="match status" value="1"/>
</dbReference>